<gene>
    <name evidence="1" type="primary">yegS</name>
    <name type="ordered locus">SSPA0671</name>
</gene>
<dbReference type="EC" id="2.7.1.-" evidence="1"/>
<dbReference type="EMBL" id="FM200053">
    <property type="protein sequence ID" value="CAR58802.1"/>
    <property type="molecule type" value="Genomic_DNA"/>
</dbReference>
<dbReference type="RefSeq" id="WP_001273395.1">
    <property type="nucleotide sequence ID" value="NC_011147.1"/>
</dbReference>
<dbReference type="SMR" id="B5BF43"/>
<dbReference type="KEGG" id="sek:SSPA0671"/>
<dbReference type="HOGENOM" id="CLU_045532_1_1_6"/>
<dbReference type="Proteomes" id="UP000001869">
    <property type="component" value="Chromosome"/>
</dbReference>
<dbReference type="GO" id="GO:0005737">
    <property type="term" value="C:cytoplasm"/>
    <property type="evidence" value="ECO:0007669"/>
    <property type="project" value="UniProtKB-SubCell"/>
</dbReference>
<dbReference type="GO" id="GO:0005886">
    <property type="term" value="C:plasma membrane"/>
    <property type="evidence" value="ECO:0007669"/>
    <property type="project" value="TreeGrafter"/>
</dbReference>
<dbReference type="GO" id="GO:0005524">
    <property type="term" value="F:ATP binding"/>
    <property type="evidence" value="ECO:0007669"/>
    <property type="project" value="UniProtKB-UniRule"/>
</dbReference>
<dbReference type="GO" id="GO:0001727">
    <property type="term" value="F:lipid kinase activity"/>
    <property type="evidence" value="ECO:0007669"/>
    <property type="project" value="UniProtKB-UniRule"/>
</dbReference>
<dbReference type="GO" id="GO:0000287">
    <property type="term" value="F:magnesium ion binding"/>
    <property type="evidence" value="ECO:0007669"/>
    <property type="project" value="UniProtKB-UniRule"/>
</dbReference>
<dbReference type="GO" id="GO:0008654">
    <property type="term" value="P:phospholipid biosynthetic process"/>
    <property type="evidence" value="ECO:0007669"/>
    <property type="project" value="UniProtKB-UniRule"/>
</dbReference>
<dbReference type="FunFam" id="3.40.50.10330:FF:000008">
    <property type="entry name" value="Probable lipid kinase YegS"/>
    <property type="match status" value="1"/>
</dbReference>
<dbReference type="Gene3D" id="2.60.200.40">
    <property type="match status" value="1"/>
</dbReference>
<dbReference type="Gene3D" id="3.40.50.10330">
    <property type="entry name" value="Probable inorganic polyphosphate/atp-NAD kinase, domain 1"/>
    <property type="match status" value="1"/>
</dbReference>
<dbReference type="HAMAP" id="MF_01377">
    <property type="entry name" value="YegS"/>
    <property type="match status" value="1"/>
</dbReference>
<dbReference type="InterPro" id="IPR017438">
    <property type="entry name" value="ATP-NAD_kinase_N"/>
</dbReference>
<dbReference type="InterPro" id="IPR005218">
    <property type="entry name" value="Diacylglycerol/lipid_kinase"/>
</dbReference>
<dbReference type="InterPro" id="IPR001206">
    <property type="entry name" value="Diacylglycerol_kinase_cat_dom"/>
</dbReference>
<dbReference type="InterPro" id="IPR022433">
    <property type="entry name" value="Lip_kinase_YegS"/>
</dbReference>
<dbReference type="InterPro" id="IPR050187">
    <property type="entry name" value="Lipid_Phosphate_FormReg"/>
</dbReference>
<dbReference type="InterPro" id="IPR016064">
    <property type="entry name" value="NAD/diacylglycerol_kinase_sf"/>
</dbReference>
<dbReference type="InterPro" id="IPR045540">
    <property type="entry name" value="YegS/DAGK_C"/>
</dbReference>
<dbReference type="NCBIfam" id="TIGR03702">
    <property type="entry name" value="lip_kinase_YegS"/>
    <property type="match status" value="1"/>
</dbReference>
<dbReference type="NCBIfam" id="NF009602">
    <property type="entry name" value="PRK13054.1"/>
    <property type="match status" value="1"/>
</dbReference>
<dbReference type="NCBIfam" id="TIGR00147">
    <property type="entry name" value="YegS/Rv2252/BmrU family lipid kinase"/>
    <property type="match status" value="1"/>
</dbReference>
<dbReference type="PANTHER" id="PTHR12358:SF106">
    <property type="entry name" value="LIPID KINASE YEGS"/>
    <property type="match status" value="1"/>
</dbReference>
<dbReference type="PANTHER" id="PTHR12358">
    <property type="entry name" value="SPHINGOSINE KINASE"/>
    <property type="match status" value="1"/>
</dbReference>
<dbReference type="Pfam" id="PF00781">
    <property type="entry name" value="DAGK_cat"/>
    <property type="match status" value="1"/>
</dbReference>
<dbReference type="Pfam" id="PF19279">
    <property type="entry name" value="YegS_C"/>
    <property type="match status" value="1"/>
</dbReference>
<dbReference type="SMART" id="SM00046">
    <property type="entry name" value="DAGKc"/>
    <property type="match status" value="1"/>
</dbReference>
<dbReference type="SUPFAM" id="SSF111331">
    <property type="entry name" value="NAD kinase/diacylglycerol kinase-like"/>
    <property type="match status" value="1"/>
</dbReference>
<dbReference type="PROSITE" id="PS50146">
    <property type="entry name" value="DAGK"/>
    <property type="match status" value="1"/>
</dbReference>
<protein>
    <recommendedName>
        <fullName evidence="1">Probable lipid kinase YegS</fullName>
        <ecNumber evidence="1">2.7.1.-</ecNumber>
    </recommendedName>
</protein>
<reference key="1">
    <citation type="journal article" date="2009" name="BMC Genomics">
        <title>Pseudogene accumulation in the evolutionary histories of Salmonella enterica serovars Paratyphi A and Typhi.</title>
        <authorList>
            <person name="Holt K.E."/>
            <person name="Thomson N.R."/>
            <person name="Wain J."/>
            <person name="Langridge G.C."/>
            <person name="Hasan R."/>
            <person name="Bhutta Z.A."/>
            <person name="Quail M.A."/>
            <person name="Norbertczak H."/>
            <person name="Walker D."/>
            <person name="Simmonds M."/>
            <person name="White B."/>
            <person name="Bason N."/>
            <person name="Mungall K."/>
            <person name="Dougan G."/>
            <person name="Parkhill J."/>
        </authorList>
    </citation>
    <scope>NUCLEOTIDE SEQUENCE [LARGE SCALE GENOMIC DNA]</scope>
    <source>
        <strain>AKU_12601</strain>
    </source>
</reference>
<comment type="function">
    <text evidence="1">Probably phosphorylates lipids; the in vivo substrate is unknown.</text>
</comment>
<comment type="cofactor">
    <cofactor evidence="1">
        <name>Mg(2+)</name>
        <dbReference type="ChEBI" id="CHEBI:18420"/>
    </cofactor>
    <cofactor evidence="1">
        <name>Ca(2+)</name>
        <dbReference type="ChEBI" id="CHEBI:29108"/>
    </cofactor>
    <text evidence="1">Binds 1 Mg(2+) ion per subunit. Ca(2+) may be able to substitute.</text>
</comment>
<comment type="subcellular location">
    <subcellularLocation>
        <location evidence="1">Cytoplasm</location>
    </subcellularLocation>
</comment>
<comment type="similarity">
    <text evidence="1">Belongs to the diacylglycerol/lipid kinase family. YegS lipid kinase subfamily.</text>
</comment>
<sequence length="299" mass="32040">MANFPASLLILNGKSADNQPLREAITLLRDEGIQIHVRVTWEKGDAQRYVDEARRLGVETVIAGGGDGTINEVSTALIQIRDGVAPALGLLPLGTANDFATSAGIPEALDKALKLAIAGNAMEIDMARVNDKTCFINMATGGFGTRITTETPEKLKAALGGVSYLIHGLMRMDTLTPDRCEIRGENFHWQGDALVIGIGNGRQAGGGQQLCPTALVNDGLLQLRIFTGEELLPALFSTLTQSDDNPNIIDGASAWFDIHAPHEITFNLDGEPLSGQEFHIEVLPGALRCRLPPDCPLLR</sequence>
<organism>
    <name type="scientific">Salmonella paratyphi A (strain AKU_12601)</name>
    <dbReference type="NCBI Taxonomy" id="554290"/>
    <lineage>
        <taxon>Bacteria</taxon>
        <taxon>Pseudomonadati</taxon>
        <taxon>Pseudomonadota</taxon>
        <taxon>Gammaproteobacteria</taxon>
        <taxon>Enterobacterales</taxon>
        <taxon>Enterobacteriaceae</taxon>
        <taxon>Salmonella</taxon>
    </lineage>
</organism>
<proteinExistence type="inferred from homology"/>
<feature type="chain" id="PRO_1000144877" description="Probable lipid kinase YegS">
    <location>
        <begin position="1"/>
        <end position="299"/>
    </location>
</feature>
<feature type="domain" description="DAGKc" evidence="1">
    <location>
        <begin position="2"/>
        <end position="133"/>
    </location>
</feature>
<feature type="active site" description="Proton acceptor" evidence="1">
    <location>
        <position position="271"/>
    </location>
</feature>
<feature type="binding site" evidence="1">
    <location>
        <position position="40"/>
    </location>
    <ligand>
        <name>ATP</name>
        <dbReference type="ChEBI" id="CHEBI:30616"/>
    </ligand>
</feature>
<feature type="binding site" evidence="1">
    <location>
        <begin position="66"/>
        <end position="72"/>
    </location>
    <ligand>
        <name>ATP</name>
        <dbReference type="ChEBI" id="CHEBI:30616"/>
    </ligand>
</feature>
<feature type="binding site" evidence="1">
    <location>
        <position position="95"/>
    </location>
    <ligand>
        <name>ATP</name>
        <dbReference type="ChEBI" id="CHEBI:30616"/>
    </ligand>
</feature>
<feature type="binding site" evidence="1">
    <location>
        <position position="215"/>
    </location>
    <ligand>
        <name>Mg(2+)</name>
        <dbReference type="ChEBI" id="CHEBI:18420"/>
    </ligand>
</feature>
<feature type="binding site" evidence="1">
    <location>
        <position position="218"/>
    </location>
    <ligand>
        <name>Mg(2+)</name>
        <dbReference type="ChEBI" id="CHEBI:18420"/>
    </ligand>
</feature>
<feature type="binding site" evidence="1">
    <location>
        <position position="220"/>
    </location>
    <ligand>
        <name>Mg(2+)</name>
        <dbReference type="ChEBI" id="CHEBI:18420"/>
    </ligand>
</feature>
<keyword id="KW-0067">ATP-binding</keyword>
<keyword id="KW-0963">Cytoplasm</keyword>
<keyword id="KW-0418">Kinase</keyword>
<keyword id="KW-0444">Lipid biosynthesis</keyword>
<keyword id="KW-0443">Lipid metabolism</keyword>
<keyword id="KW-0460">Magnesium</keyword>
<keyword id="KW-0479">Metal-binding</keyword>
<keyword id="KW-0547">Nucleotide-binding</keyword>
<keyword id="KW-0594">Phospholipid biosynthesis</keyword>
<keyword id="KW-1208">Phospholipid metabolism</keyword>
<keyword id="KW-0808">Transferase</keyword>
<accession>B5BF43</accession>
<name>YEGS_SALPK</name>
<evidence type="ECO:0000255" key="1">
    <source>
        <dbReference type="HAMAP-Rule" id="MF_01377"/>
    </source>
</evidence>